<gene>
    <name evidence="5" type="primary">janC</name>
</gene>
<proteinExistence type="inferred from homology"/>
<sequence length="327" mass="37174">MAFPGAGPILGAIAVSSCLYFLFDYVPIPRWWDKNAYLIGQMHPDEITGLECPYAYLRQIYGKYHWAPFVHKISPTLQKDDYPKYVMVLEIMDAIHLCLMLVDDISDGSDYRKGKPAAHKIYGPTETANRAYYRVTQILAQTTKEFPNLAPWLMGDLRDILEGQDMSLVWRRDGIGGFPTAAKDRAAAYRKMASLKTGALFRLLGHLVLENDSMDEVFTVIAWYSQLQNDCKNVYSSEYAKLKGLVAEDLHNREMTYPIVLALDAPEGHWVTRALESPSPRNIRNALKVIRSKYVRDKCTAELAESGASVKEWLQLWGRTEKLDLKA</sequence>
<reference key="1">
    <citation type="journal article" date="2015" name="Toxins">
        <title>Molecular cloning and functional analysis of gene clusters for the biosynthesis of indole-diterpenes in Penicillium crustosum and P. janthinellum.</title>
        <authorList>
            <person name="Nicholson M.J."/>
            <person name="Eaton C.J."/>
            <person name="Starkel C."/>
            <person name="Tapper B.A."/>
            <person name="Cox M.P."/>
            <person name="Scott B."/>
        </authorList>
    </citation>
    <scope>NUCLEOTIDE SEQUENCE [GENOMIC DNA]</scope>
    <scope>IDENTIFICATION</scope>
    <scope>FUNCTION</scope>
    <scope>PATHWAY</scope>
    <source>
        <strain>PN2408</strain>
    </source>
</reference>
<keyword id="KW-0325">Glycoprotein</keyword>
<keyword id="KW-0460">Magnesium</keyword>
<keyword id="KW-0472">Membrane</keyword>
<keyword id="KW-0479">Metal-binding</keyword>
<keyword id="KW-0808">Transferase</keyword>
<keyword id="KW-0812">Transmembrane</keyword>
<keyword id="KW-1133">Transmembrane helix</keyword>
<organism>
    <name type="scientific">Penicillium janthinellum</name>
    <name type="common">Penicillium vitale</name>
    <dbReference type="NCBI Taxonomy" id="5079"/>
    <lineage>
        <taxon>Eukaryota</taxon>
        <taxon>Fungi</taxon>
        <taxon>Dikarya</taxon>
        <taxon>Ascomycota</taxon>
        <taxon>Pezizomycotina</taxon>
        <taxon>Eurotiomycetes</taxon>
        <taxon>Eurotiomycetidae</taxon>
        <taxon>Eurotiales</taxon>
        <taxon>Aspergillaceae</taxon>
        <taxon>Penicillium</taxon>
    </lineage>
</organism>
<name>JANC_PENJA</name>
<comment type="function">
    <text evidence="4 7">Prenyl transferase; part of the gene cluster that mediates the biosynthesis of the indole diterpenes janthitremanes such as shearinine K or shearinine A (PubMed:26213965). The geranylgeranyl diphosphate (GGPP) synthase janG catalyzes the first step in janthitremane biosynthesis via conversion of farnesyl pyrophosphate and isopentyl pyrophosphate into geranylgeranyl pyrophosphate (GGPP) (PubMed:26213965). Condensation of indole-3-glycerol phosphate with GGPP by the prenyl transferase janC then forms 3-geranylgeranylindole (3-GGI) (PubMed:26213965). Epoxidation by the FAD-dependent monooxygenase janM leads to a epoxidized-GGI that is substrate of the terpene cyclase janB for cyclization to yield paspaline (PubMed:26213965). Paspaline is subsequently converted to 13-desoxypaspaline by the cytochrome P450 monooxygenase janP, via beta-PC-M6 in a series of alpha-face oxidations (Probable). The cytochrome P450 monooxygenase janQ is proposed to carry out sequential beta-face oxidation steps at C-7 and C-13 of 13-desoxypaspaline to form paspalicine and paspalinine respectively (Probable). The indole diterpene prenyltransferase janD may then convert paspalinine into shearinine K which is substrate of janO and/or additional enzymes for oxidation and cyclization to generate shearinine A (Probable).</text>
</comment>
<comment type="pathway">
    <text evidence="7">Secondary metabolite biosynthesis.</text>
</comment>
<comment type="subcellular location">
    <subcellularLocation>
        <location evidence="2">Membrane</location>
        <topology evidence="2">Single-pass membrane protein</topology>
    </subcellularLocation>
</comment>
<comment type="similarity">
    <text evidence="6">Belongs to the FPP/GGPP synthase family.</text>
</comment>
<evidence type="ECO:0000250" key="1">
    <source>
        <dbReference type="UniProtKB" id="Q12051"/>
    </source>
</evidence>
<evidence type="ECO:0000255" key="2"/>
<evidence type="ECO:0000255" key="3">
    <source>
        <dbReference type="PROSITE-ProRule" id="PRU00498"/>
    </source>
</evidence>
<evidence type="ECO:0000269" key="4">
    <source>
    </source>
</evidence>
<evidence type="ECO:0000303" key="5">
    <source>
    </source>
</evidence>
<evidence type="ECO:0000305" key="6"/>
<evidence type="ECO:0000305" key="7">
    <source>
    </source>
</evidence>
<dbReference type="EC" id="2.5.1.-" evidence="7"/>
<dbReference type="EMBL" id="KF280651">
    <property type="protein sequence ID" value="AGZ20475.1"/>
    <property type="molecule type" value="Genomic_DNA"/>
</dbReference>
<dbReference type="SMR" id="A0A0E3D8L3"/>
<dbReference type="GlyCosmos" id="A0A0E3D8L3">
    <property type="glycosylation" value="1 site, No reported glycans"/>
</dbReference>
<dbReference type="GO" id="GO:0016020">
    <property type="term" value="C:membrane"/>
    <property type="evidence" value="ECO:0007669"/>
    <property type="project" value="UniProtKB-SubCell"/>
</dbReference>
<dbReference type="GO" id="GO:0046872">
    <property type="term" value="F:metal ion binding"/>
    <property type="evidence" value="ECO:0007669"/>
    <property type="project" value="UniProtKB-KW"/>
</dbReference>
<dbReference type="GO" id="GO:0004659">
    <property type="term" value="F:prenyltransferase activity"/>
    <property type="evidence" value="ECO:0007669"/>
    <property type="project" value="InterPro"/>
</dbReference>
<dbReference type="GO" id="GO:0046165">
    <property type="term" value="P:alcohol biosynthetic process"/>
    <property type="evidence" value="ECO:0007669"/>
    <property type="project" value="UniProtKB-ARBA"/>
</dbReference>
<dbReference type="GO" id="GO:0008299">
    <property type="term" value="P:isoprenoid biosynthetic process"/>
    <property type="evidence" value="ECO:0007669"/>
    <property type="project" value="InterPro"/>
</dbReference>
<dbReference type="GO" id="GO:0043386">
    <property type="term" value="P:mycotoxin biosynthetic process"/>
    <property type="evidence" value="ECO:0007669"/>
    <property type="project" value="UniProtKB-ARBA"/>
</dbReference>
<dbReference type="CDD" id="cd00867">
    <property type="entry name" value="Trans_IPPS"/>
    <property type="match status" value="1"/>
</dbReference>
<dbReference type="Gene3D" id="1.10.600.10">
    <property type="entry name" value="Farnesyl Diphosphate Synthase"/>
    <property type="match status" value="1"/>
</dbReference>
<dbReference type="InterPro" id="IPR008949">
    <property type="entry name" value="Isoprenoid_synthase_dom_sf"/>
</dbReference>
<dbReference type="InterPro" id="IPR000092">
    <property type="entry name" value="Polyprenyl_synt"/>
</dbReference>
<dbReference type="PANTHER" id="PTHR12001">
    <property type="entry name" value="GERANYLGERANYL PYROPHOSPHATE SYNTHASE"/>
    <property type="match status" value="1"/>
</dbReference>
<dbReference type="PANTHER" id="PTHR12001:SF72">
    <property type="entry name" value="THIJ_PFPI FAMILY PROTEIN (AFU_ORTHOLOGUE AFUA_3G01210)-RELATED"/>
    <property type="match status" value="1"/>
</dbReference>
<dbReference type="Pfam" id="PF00348">
    <property type="entry name" value="polyprenyl_synt"/>
    <property type="match status" value="1"/>
</dbReference>
<dbReference type="SUPFAM" id="SSF48576">
    <property type="entry name" value="Terpenoid synthases"/>
    <property type="match status" value="1"/>
</dbReference>
<feature type="chain" id="PRO_0000446548" description="Prenyl transferase janC">
    <location>
        <begin position="1"/>
        <end position="327"/>
    </location>
</feature>
<feature type="transmembrane region" description="Helical" evidence="2">
    <location>
        <begin position="3"/>
        <end position="23"/>
    </location>
</feature>
<feature type="binding site" evidence="1">
    <location>
        <position position="63"/>
    </location>
    <ligand>
        <name>isopentenyl diphosphate</name>
        <dbReference type="ChEBI" id="CHEBI:128769"/>
    </ligand>
</feature>
<feature type="binding site" evidence="1">
    <location>
        <position position="96"/>
    </location>
    <ligand>
        <name>isopentenyl diphosphate</name>
        <dbReference type="ChEBI" id="CHEBI:128769"/>
    </ligand>
</feature>
<feature type="binding site" evidence="1">
    <location>
        <position position="103"/>
    </location>
    <ligand>
        <name>Mg(2+)</name>
        <dbReference type="ChEBI" id="CHEBI:18420"/>
        <label>1</label>
    </ligand>
</feature>
<feature type="binding site" evidence="1">
    <location>
        <position position="103"/>
    </location>
    <ligand>
        <name>Mg(2+)</name>
        <dbReference type="ChEBI" id="CHEBI:18420"/>
        <label>2</label>
    </ligand>
</feature>
<feature type="binding site" evidence="1">
    <location>
        <position position="107"/>
    </location>
    <ligand>
        <name>Mg(2+)</name>
        <dbReference type="ChEBI" id="CHEBI:18420"/>
        <label>1</label>
    </ligand>
</feature>
<feature type="binding site" evidence="1">
    <location>
        <position position="107"/>
    </location>
    <ligand>
        <name>Mg(2+)</name>
        <dbReference type="ChEBI" id="CHEBI:18420"/>
        <label>2</label>
    </ligand>
</feature>
<feature type="binding site" evidence="1">
    <location>
        <position position="112"/>
    </location>
    <ligand>
        <name>dimethylallyl diphosphate</name>
        <dbReference type="ChEBI" id="CHEBI:57623"/>
    </ligand>
</feature>
<feature type="binding site" evidence="1">
    <location>
        <position position="196"/>
    </location>
    <ligand>
        <name>dimethylallyl diphosphate</name>
        <dbReference type="ChEBI" id="CHEBI:57623"/>
    </ligand>
</feature>
<feature type="glycosylation site" description="N-linked (GlcNAc...) asparagine" evidence="3">
    <location>
        <position position="211"/>
    </location>
</feature>
<protein>
    <recommendedName>
        <fullName evidence="5">Prenyl transferase janC</fullName>
        <ecNumber evidence="7">2.5.1.-</ecNumber>
    </recommendedName>
    <alternativeName>
        <fullName evidence="5">Janthitremanes biosynthesis cluster protein C</fullName>
    </alternativeName>
</protein>
<accession>A0A0E3D8L3</accession>